<organism>
    <name type="scientific">Eremothecium gossypii (strain ATCC 10895 / CBS 109.51 / FGSC 9923 / NRRL Y-1056)</name>
    <name type="common">Yeast</name>
    <name type="synonym">Ashbya gossypii</name>
    <dbReference type="NCBI Taxonomy" id="284811"/>
    <lineage>
        <taxon>Eukaryota</taxon>
        <taxon>Fungi</taxon>
        <taxon>Dikarya</taxon>
        <taxon>Ascomycota</taxon>
        <taxon>Saccharomycotina</taxon>
        <taxon>Saccharomycetes</taxon>
        <taxon>Saccharomycetales</taxon>
        <taxon>Saccharomycetaceae</taxon>
        <taxon>Eremothecium</taxon>
    </lineage>
</organism>
<keyword id="KW-0175">Coiled coil</keyword>
<keyword id="KW-0968">Cytoplasmic vesicle</keyword>
<keyword id="KW-0333">Golgi apparatus</keyword>
<keyword id="KW-0472">Membrane</keyword>
<keyword id="KW-0653">Protein transport</keyword>
<keyword id="KW-1185">Reference proteome</keyword>
<keyword id="KW-0677">Repeat</keyword>
<keyword id="KW-0813">Transport</keyword>
<evidence type="ECO:0000250" key="1"/>
<evidence type="ECO:0000250" key="2">
    <source>
        <dbReference type="UniProtKB" id="Q08951"/>
    </source>
</evidence>
<evidence type="ECO:0000255" key="3"/>
<evidence type="ECO:0000256" key="4">
    <source>
        <dbReference type="SAM" id="MobiDB-lite"/>
    </source>
</evidence>
<evidence type="ECO:0000305" key="5"/>
<sequence length="899" mass="101753">MSSLYAPTDEVKRRLRPFGLFFEKSLKDLIKGIRSQQSPEQLHEFLTRVLSECREEVKHADFNMKTNAVLKLTYLEMYGFDMSWANFHVLEVMSSTRFQQKRVGYLAASQSFYKDHDILMLATNLLRKDLKYSLSNETVRMGVALSGLSAMVTPELARDICEDLFLMLHSTKPYIRKKAVTALFKVFLQYPEGLRDNFEKFVDRLEDDDLSVVSATVSVICELSKHNPQPFIQLSPILYQMLIKVDNNWVIIRLLKLFTNLAQIEPKLRVKILPNVLELMDSTTAISVVYESINCIVKGNMLNSDDYDSAVACLDKLHDFCTSNDPNLRYLSCVLFYKIGKINTDFIANFDVLILRLLVDVDVSIRSKTLELLEGIVTEDNLVDFVQRLLKQFVDVDKICVNDQEFSIDIPEYYKSKMIHAICKITAMKNYANVTDFEWYIALLSDLCIVSQDLQDKTLAQKLGEQIRNIMVKVPDLRDRTLAQIVQLVKSEDITARLPGVLKECIWCLGEYSSLLDNKDEYILLLAENSKLYEPELQQTLIPAILKIYSNWCNESVVDTGRIKWVTERIITPLEDLIISKNFEVQERSSEALEFLRLCLDSLSEDASDSLPLLLTEVLPSFFNAFELQPITSGTQRKLQQSISVDCDTPFLTESELEQLLADDTSVDGIVSPDVSDTESDSEMYVPGAAPKDKGSSPTHELTTAELEAINERRKQERVGNPFYLDDADVGSVKKVDILDNLSNSKPSSSGSLVRLSSESKAKEKKKKVKVRVISDAVIVDGVNTADVTDDRPSNTPSARNKIALQLKNKLDSFDFTKPRDEGDYDPDVDLQKLREKFAQQRLLDESAAAEEEVVVVKKKKRSKDGSKSSKKKSRSKSKPSSKGGDTAEAELLPGLTTE</sequence>
<gene>
    <name type="primary">APL5</name>
    <name type="ordered locus">AFL076W</name>
</gene>
<dbReference type="EMBL" id="AE016819">
    <property type="protein sequence ID" value="AAS53296.1"/>
    <property type="molecule type" value="Genomic_DNA"/>
</dbReference>
<dbReference type="RefSeq" id="NP_985472.1">
    <property type="nucleotide sequence ID" value="NM_210826.1"/>
</dbReference>
<dbReference type="SMR" id="Q755A1"/>
<dbReference type="FunCoup" id="Q755A1">
    <property type="interactions" value="659"/>
</dbReference>
<dbReference type="STRING" id="284811.Q755A1"/>
<dbReference type="EnsemblFungi" id="AAS53296">
    <property type="protein sequence ID" value="AAS53296"/>
    <property type="gene ID" value="AGOS_AFL076W"/>
</dbReference>
<dbReference type="GeneID" id="4621701"/>
<dbReference type="KEGG" id="ago:AGOS_AFL076W"/>
<dbReference type="eggNOG" id="KOG1059">
    <property type="taxonomic scope" value="Eukaryota"/>
</dbReference>
<dbReference type="HOGENOM" id="CLU_001908_1_1_1"/>
<dbReference type="InParanoid" id="Q755A1"/>
<dbReference type="OMA" id="CIHTIII"/>
<dbReference type="OrthoDB" id="10264595at2759"/>
<dbReference type="Proteomes" id="UP000000591">
    <property type="component" value="Chromosome VI"/>
</dbReference>
<dbReference type="GO" id="GO:0030123">
    <property type="term" value="C:AP-3 adaptor complex"/>
    <property type="evidence" value="ECO:0000318"/>
    <property type="project" value="GO_Central"/>
</dbReference>
<dbReference type="GO" id="GO:0030665">
    <property type="term" value="C:clathrin-coated vesicle membrane"/>
    <property type="evidence" value="ECO:0007669"/>
    <property type="project" value="UniProtKB-SubCell"/>
</dbReference>
<dbReference type="GO" id="GO:0010008">
    <property type="term" value="C:endosome membrane"/>
    <property type="evidence" value="ECO:0000318"/>
    <property type="project" value="GO_Central"/>
</dbReference>
<dbReference type="GO" id="GO:0005794">
    <property type="term" value="C:Golgi apparatus"/>
    <property type="evidence" value="ECO:0007669"/>
    <property type="project" value="UniProtKB-SubCell"/>
</dbReference>
<dbReference type="GO" id="GO:0006896">
    <property type="term" value="P:Golgi to vacuole transport"/>
    <property type="evidence" value="ECO:0000318"/>
    <property type="project" value="GO_Central"/>
</dbReference>
<dbReference type="GO" id="GO:0006623">
    <property type="term" value="P:protein targeting to vacuole"/>
    <property type="evidence" value="ECO:0000318"/>
    <property type="project" value="GO_Central"/>
</dbReference>
<dbReference type="FunFam" id="1.25.10.10:FF:000251">
    <property type="entry name" value="AP-3 complex subunit delta"/>
    <property type="match status" value="1"/>
</dbReference>
<dbReference type="Gene3D" id="1.25.10.10">
    <property type="entry name" value="Leucine-rich Repeat Variant"/>
    <property type="match status" value="1"/>
</dbReference>
<dbReference type="InterPro" id="IPR017105">
    <property type="entry name" value="AP3_complex_dsu"/>
</dbReference>
<dbReference type="InterPro" id="IPR011989">
    <property type="entry name" value="ARM-like"/>
</dbReference>
<dbReference type="InterPro" id="IPR016024">
    <property type="entry name" value="ARM-type_fold"/>
</dbReference>
<dbReference type="InterPro" id="IPR002553">
    <property type="entry name" value="Clathrin/coatomer_adapt-like_N"/>
</dbReference>
<dbReference type="PANTHER" id="PTHR22781:SF12">
    <property type="entry name" value="AP-3 COMPLEX SUBUNIT DELTA-1"/>
    <property type="match status" value="1"/>
</dbReference>
<dbReference type="PANTHER" id="PTHR22781">
    <property type="entry name" value="DELTA ADAPTIN-RELATED"/>
    <property type="match status" value="1"/>
</dbReference>
<dbReference type="Pfam" id="PF01602">
    <property type="entry name" value="Adaptin_N"/>
    <property type="match status" value="1"/>
</dbReference>
<dbReference type="PIRSF" id="PIRSF037092">
    <property type="entry name" value="AP3_complex_delta"/>
    <property type="match status" value="1"/>
</dbReference>
<dbReference type="SUPFAM" id="SSF48371">
    <property type="entry name" value="ARM repeat"/>
    <property type="match status" value="1"/>
</dbReference>
<protein>
    <recommendedName>
        <fullName>AP-3 complex subunit delta</fullName>
    </recommendedName>
    <alternativeName>
        <fullName>Adaptor-related protein complex 3 subunit delta</fullName>
    </alternativeName>
    <alternativeName>
        <fullName>Delta-adaptin 3</fullName>
        <shortName>Delta-adaptin</shortName>
    </alternativeName>
</protein>
<feature type="chain" id="PRO_0000227675" description="AP-3 complex subunit delta">
    <location>
        <begin position="1"/>
        <end position="899"/>
    </location>
</feature>
<feature type="repeat" description="HEAT 1">
    <location>
        <begin position="37"/>
        <end position="74"/>
    </location>
</feature>
<feature type="repeat" description="HEAT 2">
    <location>
        <begin position="155"/>
        <end position="192"/>
    </location>
</feature>
<feature type="repeat" description="HEAT 3">
    <location>
        <begin position="194"/>
        <end position="229"/>
    </location>
</feature>
<feature type="repeat" description="HEAT 4">
    <location>
        <begin position="231"/>
        <end position="267"/>
    </location>
</feature>
<feature type="repeat" description="HEAT 5">
    <location>
        <begin position="268"/>
        <end position="305"/>
    </location>
</feature>
<feature type="repeat" description="HEAT 6">
    <location>
        <begin position="308"/>
        <end position="344"/>
    </location>
</feature>
<feature type="repeat" description="HEAT 7">
    <location>
        <begin position="345"/>
        <end position="382"/>
    </location>
</feature>
<feature type="repeat" description="HEAT 8">
    <location>
        <begin position="384"/>
        <end position="428"/>
    </location>
</feature>
<feature type="repeat" description="HEAT 9">
    <location>
        <begin position="480"/>
        <end position="518"/>
    </location>
</feature>
<feature type="repeat" description="HEAT 10">
    <location>
        <begin position="536"/>
        <end position="580"/>
    </location>
</feature>
<feature type="repeat" description="HEAT 11">
    <location>
        <begin position="590"/>
        <end position="613"/>
    </location>
</feature>
<feature type="repeat" description="HEAT 12">
    <location>
        <begin position="614"/>
        <end position="656"/>
    </location>
</feature>
<feature type="region of interest" description="Disordered" evidence="4">
    <location>
        <begin position="668"/>
        <end position="701"/>
    </location>
</feature>
<feature type="region of interest" description="Disordered" evidence="4">
    <location>
        <begin position="741"/>
        <end position="768"/>
    </location>
</feature>
<feature type="region of interest" description="Disordered" evidence="4">
    <location>
        <begin position="782"/>
        <end position="801"/>
    </location>
</feature>
<feature type="region of interest" description="Disordered" evidence="4">
    <location>
        <begin position="849"/>
        <end position="899"/>
    </location>
</feature>
<feature type="coiled-coil region" evidence="3">
    <location>
        <begin position="841"/>
        <end position="862"/>
    </location>
</feature>
<feature type="compositionally biased region" description="Low complexity" evidence="4">
    <location>
        <begin position="743"/>
        <end position="759"/>
    </location>
</feature>
<feature type="compositionally biased region" description="Basic residues" evidence="4">
    <location>
        <begin position="857"/>
        <end position="880"/>
    </location>
</feature>
<comment type="function">
    <text evidence="1">Part of the AP-3 complex, an adaptor-related complex which is not clathrin-associated. The complex is associated with the Golgi region as well as more peripheral structures. It facilitates the budding of vesicles from the Golgi membrane and may be directly involved in trafficking to the vacuole (By similarity).</text>
</comment>
<comment type="subunit">
    <text evidence="1">Adaptor protein complex 3 (AP-3) is a heterotetramer composed of 2 large adaptins (APL5 and APL6), a medium adaptin (APM3) and a small adaptin (APS3).</text>
</comment>
<comment type="subcellular location">
    <subcellularLocation>
        <location evidence="2">Golgi apparatus</location>
    </subcellularLocation>
    <subcellularLocation>
        <location evidence="2">Cytoplasmic vesicle</location>
        <location evidence="2">Clathrin-coated vesicle membrane</location>
        <topology evidence="2">Peripheral membrane protein</topology>
        <orientation evidence="2">Cytoplasmic side</orientation>
    </subcellularLocation>
    <text evidence="2">Component of the coat surrounding the cytoplasmic face of coated vesicles located at the Golgi complex.</text>
</comment>
<comment type="similarity">
    <text evidence="5">Belongs to the adaptor complexes large subunit family.</text>
</comment>
<name>AP3D_EREGS</name>
<proteinExistence type="inferred from homology"/>
<accession>Q755A1</accession>
<reference key="1">
    <citation type="journal article" date="2004" name="Science">
        <title>The Ashbya gossypii genome as a tool for mapping the ancient Saccharomyces cerevisiae genome.</title>
        <authorList>
            <person name="Dietrich F.S."/>
            <person name="Voegeli S."/>
            <person name="Brachat S."/>
            <person name="Lerch A."/>
            <person name="Gates K."/>
            <person name="Steiner S."/>
            <person name="Mohr C."/>
            <person name="Poehlmann R."/>
            <person name="Luedi P."/>
            <person name="Choi S."/>
            <person name="Wing R.A."/>
            <person name="Flavier A."/>
            <person name="Gaffney T.D."/>
            <person name="Philippsen P."/>
        </authorList>
    </citation>
    <scope>NUCLEOTIDE SEQUENCE [LARGE SCALE GENOMIC DNA]</scope>
    <source>
        <strain>ATCC 10895 / CBS 109.51 / FGSC 9923 / NRRL Y-1056</strain>
    </source>
</reference>
<reference key="2">
    <citation type="journal article" date="2013" name="G3 (Bethesda)">
        <title>Genomes of Ashbya fungi isolated from insects reveal four mating-type loci, numerous translocations, lack of transposons, and distinct gene duplications.</title>
        <authorList>
            <person name="Dietrich F.S."/>
            <person name="Voegeli S."/>
            <person name="Kuo S."/>
            <person name="Philippsen P."/>
        </authorList>
    </citation>
    <scope>GENOME REANNOTATION</scope>
    <source>
        <strain>ATCC 10895 / CBS 109.51 / FGSC 9923 / NRRL Y-1056</strain>
    </source>
</reference>